<keyword id="KW-0687">Ribonucleoprotein</keyword>
<keyword id="KW-0689">Ribosomal protein</keyword>
<keyword id="KW-0694">RNA-binding</keyword>
<keyword id="KW-0699">rRNA-binding</keyword>
<keyword id="KW-0820">tRNA-binding</keyword>
<accession>Q9Z7R4</accession>
<accession>Q9JQG4</accession>
<feature type="chain" id="PRO_0000062075" description="Large ribosomal subunit protein uL16">
    <location>
        <begin position="1"/>
        <end position="138"/>
    </location>
</feature>
<sequence length="138" mass="15805">MLMPKRTKFRKQQKGQFAGLSKGATFVDFGEYAMQTLERGWVTSRQIEACRVAINRYLKRRGKVWIRIFPDKSVTKKPAETRMGKGKGAPDHWVAVVRPGRILFEVANVSKEDAQDALRRAAAKLGIKTRFVKRVERV</sequence>
<proteinExistence type="inferred from homology"/>
<dbReference type="EMBL" id="AE001363">
    <property type="protein sequence ID" value="AAD18779.1"/>
    <property type="molecule type" value="Genomic_DNA"/>
</dbReference>
<dbReference type="EMBL" id="AE002161">
    <property type="protein sequence ID" value="AAF37990.1"/>
    <property type="molecule type" value="Genomic_DNA"/>
</dbReference>
<dbReference type="EMBL" id="BA000008">
    <property type="protein sequence ID" value="BAA98847.1"/>
    <property type="molecule type" value="Genomic_DNA"/>
</dbReference>
<dbReference type="EMBL" id="AE009440">
    <property type="protein sequence ID" value="AAP98595.1"/>
    <property type="molecule type" value="Genomic_DNA"/>
</dbReference>
<dbReference type="PIR" id="B72055">
    <property type="entry name" value="B72055"/>
</dbReference>
<dbReference type="PIR" id="E86570">
    <property type="entry name" value="E86570"/>
</dbReference>
<dbReference type="RefSeq" id="NP_224836.1">
    <property type="nucleotide sequence ID" value="NC_000922.1"/>
</dbReference>
<dbReference type="RefSeq" id="WP_010883278.1">
    <property type="nucleotide sequence ID" value="NZ_LN847257.1"/>
</dbReference>
<dbReference type="SMR" id="Q9Z7R4"/>
<dbReference type="STRING" id="406984.CPK_ORF00040"/>
<dbReference type="GeneID" id="45050690"/>
<dbReference type="KEGG" id="cpa:CP_0107"/>
<dbReference type="KEGG" id="cpj:rl16"/>
<dbReference type="KEGG" id="cpn:CPn_0640"/>
<dbReference type="KEGG" id="cpt:CpB0666"/>
<dbReference type="PATRIC" id="fig|115713.3.peg.710"/>
<dbReference type="eggNOG" id="COG0197">
    <property type="taxonomic scope" value="Bacteria"/>
</dbReference>
<dbReference type="HOGENOM" id="CLU_078858_2_1_0"/>
<dbReference type="OMA" id="KGAVEYW"/>
<dbReference type="OrthoDB" id="9802589at2"/>
<dbReference type="Proteomes" id="UP000000583">
    <property type="component" value="Chromosome"/>
</dbReference>
<dbReference type="Proteomes" id="UP000000801">
    <property type="component" value="Chromosome"/>
</dbReference>
<dbReference type="GO" id="GO:0022625">
    <property type="term" value="C:cytosolic large ribosomal subunit"/>
    <property type="evidence" value="ECO:0007669"/>
    <property type="project" value="TreeGrafter"/>
</dbReference>
<dbReference type="GO" id="GO:0019843">
    <property type="term" value="F:rRNA binding"/>
    <property type="evidence" value="ECO:0007669"/>
    <property type="project" value="UniProtKB-UniRule"/>
</dbReference>
<dbReference type="GO" id="GO:0003735">
    <property type="term" value="F:structural constituent of ribosome"/>
    <property type="evidence" value="ECO:0007669"/>
    <property type="project" value="InterPro"/>
</dbReference>
<dbReference type="GO" id="GO:0000049">
    <property type="term" value="F:tRNA binding"/>
    <property type="evidence" value="ECO:0007669"/>
    <property type="project" value="UniProtKB-KW"/>
</dbReference>
<dbReference type="GO" id="GO:0006412">
    <property type="term" value="P:translation"/>
    <property type="evidence" value="ECO:0007669"/>
    <property type="project" value="UniProtKB-UniRule"/>
</dbReference>
<dbReference type="CDD" id="cd01433">
    <property type="entry name" value="Ribosomal_L16_L10e"/>
    <property type="match status" value="1"/>
</dbReference>
<dbReference type="FunFam" id="3.90.1170.10:FF:000001">
    <property type="entry name" value="50S ribosomal protein L16"/>
    <property type="match status" value="1"/>
</dbReference>
<dbReference type="Gene3D" id="3.90.1170.10">
    <property type="entry name" value="Ribosomal protein L10e/L16"/>
    <property type="match status" value="1"/>
</dbReference>
<dbReference type="HAMAP" id="MF_01342">
    <property type="entry name" value="Ribosomal_uL16"/>
    <property type="match status" value="1"/>
</dbReference>
<dbReference type="InterPro" id="IPR047873">
    <property type="entry name" value="Ribosomal_uL16"/>
</dbReference>
<dbReference type="InterPro" id="IPR000114">
    <property type="entry name" value="Ribosomal_uL16_bact-type"/>
</dbReference>
<dbReference type="InterPro" id="IPR020798">
    <property type="entry name" value="Ribosomal_uL16_CS"/>
</dbReference>
<dbReference type="InterPro" id="IPR016180">
    <property type="entry name" value="Ribosomal_uL16_dom"/>
</dbReference>
<dbReference type="InterPro" id="IPR036920">
    <property type="entry name" value="Ribosomal_uL16_sf"/>
</dbReference>
<dbReference type="NCBIfam" id="TIGR01164">
    <property type="entry name" value="rplP_bact"/>
    <property type="match status" value="1"/>
</dbReference>
<dbReference type="PANTHER" id="PTHR12220">
    <property type="entry name" value="50S/60S RIBOSOMAL PROTEIN L16"/>
    <property type="match status" value="1"/>
</dbReference>
<dbReference type="PANTHER" id="PTHR12220:SF13">
    <property type="entry name" value="LARGE RIBOSOMAL SUBUNIT PROTEIN UL16M"/>
    <property type="match status" value="1"/>
</dbReference>
<dbReference type="Pfam" id="PF00252">
    <property type="entry name" value="Ribosomal_L16"/>
    <property type="match status" value="1"/>
</dbReference>
<dbReference type="PRINTS" id="PR00060">
    <property type="entry name" value="RIBOSOMALL16"/>
</dbReference>
<dbReference type="SUPFAM" id="SSF54686">
    <property type="entry name" value="Ribosomal protein L16p/L10e"/>
    <property type="match status" value="1"/>
</dbReference>
<dbReference type="PROSITE" id="PS00586">
    <property type="entry name" value="RIBOSOMAL_L16_1"/>
    <property type="match status" value="1"/>
</dbReference>
<dbReference type="PROSITE" id="PS00701">
    <property type="entry name" value="RIBOSOMAL_L16_2"/>
    <property type="match status" value="1"/>
</dbReference>
<comment type="function">
    <text evidence="1">Binds 23S rRNA and is also seen to make contacts with the A and possibly P site tRNAs.</text>
</comment>
<comment type="subunit">
    <text evidence="1">Part of the 50S ribosomal subunit.</text>
</comment>
<comment type="similarity">
    <text evidence="1">Belongs to the universal ribosomal protein uL16 family.</text>
</comment>
<protein>
    <recommendedName>
        <fullName evidence="1">Large ribosomal subunit protein uL16</fullName>
    </recommendedName>
    <alternativeName>
        <fullName evidence="2">50S ribosomal protein L16</fullName>
    </alternativeName>
</protein>
<name>RL16_CHLPN</name>
<gene>
    <name evidence="1" type="primary">rplP</name>
    <name type="synonym">rl16</name>
    <name type="ordered locus">CPn_0640</name>
    <name type="ordered locus">CP_0107</name>
    <name type="ordered locus">CpB0666</name>
</gene>
<evidence type="ECO:0000255" key="1">
    <source>
        <dbReference type="HAMAP-Rule" id="MF_01342"/>
    </source>
</evidence>
<evidence type="ECO:0000305" key="2"/>
<reference key="1">
    <citation type="journal article" date="1999" name="Nat. Genet.">
        <title>Comparative genomes of Chlamydia pneumoniae and C. trachomatis.</title>
        <authorList>
            <person name="Kalman S."/>
            <person name="Mitchell W.P."/>
            <person name="Marathe R."/>
            <person name="Lammel C.J."/>
            <person name="Fan J."/>
            <person name="Hyman R.W."/>
            <person name="Olinger L."/>
            <person name="Grimwood J."/>
            <person name="Davis R.W."/>
            <person name="Stephens R.S."/>
        </authorList>
    </citation>
    <scope>NUCLEOTIDE SEQUENCE [LARGE SCALE GENOMIC DNA]</scope>
    <source>
        <strain>CWL029</strain>
    </source>
</reference>
<reference key="2">
    <citation type="journal article" date="2000" name="Nucleic Acids Res.">
        <title>Genome sequences of Chlamydia trachomatis MoPn and Chlamydia pneumoniae AR39.</title>
        <authorList>
            <person name="Read T.D."/>
            <person name="Brunham R.C."/>
            <person name="Shen C."/>
            <person name="Gill S.R."/>
            <person name="Heidelberg J.F."/>
            <person name="White O."/>
            <person name="Hickey E.K."/>
            <person name="Peterson J.D."/>
            <person name="Utterback T.R."/>
            <person name="Berry K.J."/>
            <person name="Bass S."/>
            <person name="Linher K.D."/>
            <person name="Weidman J.F."/>
            <person name="Khouri H.M."/>
            <person name="Craven B."/>
            <person name="Bowman C."/>
            <person name="Dodson R.J."/>
            <person name="Gwinn M.L."/>
            <person name="Nelson W.C."/>
            <person name="DeBoy R.T."/>
            <person name="Kolonay J.F."/>
            <person name="McClarty G."/>
            <person name="Salzberg S.L."/>
            <person name="Eisen J.A."/>
            <person name="Fraser C.M."/>
        </authorList>
    </citation>
    <scope>NUCLEOTIDE SEQUENCE [LARGE SCALE GENOMIC DNA]</scope>
    <source>
        <strain>AR39</strain>
    </source>
</reference>
<reference key="3">
    <citation type="journal article" date="2000" name="Nucleic Acids Res.">
        <title>Comparison of whole genome sequences of Chlamydia pneumoniae J138 from Japan and CWL029 from USA.</title>
        <authorList>
            <person name="Shirai M."/>
            <person name="Hirakawa H."/>
            <person name="Kimoto M."/>
            <person name="Tabuchi M."/>
            <person name="Kishi F."/>
            <person name="Ouchi K."/>
            <person name="Shiba T."/>
            <person name="Ishii K."/>
            <person name="Hattori M."/>
            <person name="Kuhara S."/>
            <person name="Nakazawa T."/>
        </authorList>
    </citation>
    <scope>NUCLEOTIDE SEQUENCE [LARGE SCALE GENOMIC DNA]</scope>
    <source>
        <strain>J138</strain>
    </source>
</reference>
<reference key="4">
    <citation type="submission" date="2002-05" db="EMBL/GenBank/DDBJ databases">
        <title>The genome sequence of Chlamydia pneumoniae TW183 and comparison with other Chlamydia strains based on whole genome sequence analysis.</title>
        <authorList>
            <person name="Geng M.M."/>
            <person name="Schuhmacher A."/>
            <person name="Muehldorfer I."/>
            <person name="Bensch K.W."/>
            <person name="Schaefer K.P."/>
            <person name="Schneider S."/>
            <person name="Pohl T."/>
            <person name="Essig A."/>
            <person name="Marre R."/>
            <person name="Melchers K."/>
        </authorList>
    </citation>
    <scope>NUCLEOTIDE SEQUENCE [LARGE SCALE GENOMIC DNA]</scope>
    <source>
        <strain>TW-183</strain>
    </source>
</reference>
<organism>
    <name type="scientific">Chlamydia pneumoniae</name>
    <name type="common">Chlamydophila pneumoniae</name>
    <dbReference type="NCBI Taxonomy" id="83558"/>
    <lineage>
        <taxon>Bacteria</taxon>
        <taxon>Pseudomonadati</taxon>
        <taxon>Chlamydiota</taxon>
        <taxon>Chlamydiia</taxon>
        <taxon>Chlamydiales</taxon>
        <taxon>Chlamydiaceae</taxon>
        <taxon>Chlamydia/Chlamydophila group</taxon>
        <taxon>Chlamydia</taxon>
    </lineage>
</organism>